<keyword id="KW-1003">Cell membrane</keyword>
<keyword id="KW-0472">Membrane</keyword>
<keyword id="KW-0653">Protein transport</keyword>
<keyword id="KW-1185">Reference proteome</keyword>
<keyword id="KW-0811">Translocation</keyword>
<keyword id="KW-0812">Transmembrane</keyword>
<keyword id="KW-1133">Transmembrane helix</keyword>
<keyword id="KW-0813">Transport</keyword>
<protein>
    <recommendedName>
        <fullName>Preprotein translocase subunit SecG</fullName>
    </recommendedName>
    <alternativeName>
        <fullName>Protein transport protein Sec61 subunit beta homolog</fullName>
    </alternativeName>
</protein>
<proteinExistence type="inferred from homology"/>
<accession>Q8ZV98</accession>
<gene>
    <name type="primary">secG</name>
    <name type="ordered locus">PAE2389</name>
</gene>
<comment type="function">
    <text evidence="1">Involved in protein export. The function of the beta subunit is unknown, but it may be involved in stabilization of the trimeric complex (By similarity).</text>
</comment>
<comment type="subunit">
    <text evidence="1">Component of the protein translocase complex. Heterotrimer consisting of alpha (SecY), beta (SecG) and gamma (SecE) subunits. Can form oligomers of the heterotrimer (By similarity).</text>
</comment>
<comment type="subcellular location">
    <subcellularLocation>
        <location evidence="1">Cell membrane</location>
        <topology evidence="1">Single-pass membrane protein</topology>
    </subcellularLocation>
</comment>
<comment type="similarity">
    <text evidence="2">Belongs to the SEC61-beta family.</text>
</comment>
<feature type="chain" id="PRO_0000157274" description="Preprotein translocase subunit SecG">
    <location>
        <begin position="1"/>
        <end position="58"/>
    </location>
</feature>
<feature type="topological domain" description="Cytoplasmic" evidence="1">
    <location>
        <begin position="1"/>
        <end position="33"/>
    </location>
</feature>
<feature type="transmembrane region" description="Helical" evidence="1">
    <location>
        <begin position="34"/>
        <end position="53"/>
    </location>
</feature>
<feature type="topological domain" description="Extracellular" evidence="1">
    <location>
        <begin position="54"/>
        <end position="58"/>
    </location>
</feature>
<dbReference type="EMBL" id="AE009441">
    <property type="protein sequence ID" value="AAL64158.1"/>
    <property type="molecule type" value="Genomic_DNA"/>
</dbReference>
<dbReference type="RefSeq" id="WP_011008626.1">
    <property type="nucleotide sequence ID" value="NC_003364.1"/>
</dbReference>
<dbReference type="SMR" id="Q8ZV98"/>
<dbReference type="STRING" id="178306.PAE2389"/>
<dbReference type="EnsemblBacteria" id="AAL64158">
    <property type="protein sequence ID" value="AAL64158"/>
    <property type="gene ID" value="PAE2389"/>
</dbReference>
<dbReference type="GeneID" id="1464496"/>
<dbReference type="KEGG" id="pai:PAE2389"/>
<dbReference type="PATRIC" id="fig|178306.9.peg.1782"/>
<dbReference type="eggNOG" id="arCOG02957">
    <property type="taxonomic scope" value="Archaea"/>
</dbReference>
<dbReference type="HOGENOM" id="CLU_208205_2_1_2"/>
<dbReference type="InParanoid" id="Q8ZV98"/>
<dbReference type="Proteomes" id="UP000002439">
    <property type="component" value="Chromosome"/>
</dbReference>
<dbReference type="GO" id="GO:0005886">
    <property type="term" value="C:plasma membrane"/>
    <property type="evidence" value="ECO:0007669"/>
    <property type="project" value="UniProtKB-SubCell"/>
</dbReference>
<dbReference type="GO" id="GO:0015031">
    <property type="term" value="P:protein transport"/>
    <property type="evidence" value="ECO:0007669"/>
    <property type="project" value="UniProtKB-UniRule"/>
</dbReference>
<dbReference type="HAMAP" id="MF_00751">
    <property type="entry name" value="SecG"/>
    <property type="match status" value="1"/>
</dbReference>
<dbReference type="InterPro" id="IPR023531">
    <property type="entry name" value="Preprot_translocase_SecG"/>
</dbReference>
<dbReference type="InterPro" id="IPR016482">
    <property type="entry name" value="SecG/Sec61-beta/Sbh"/>
</dbReference>
<dbReference type="NCBIfam" id="NF002318">
    <property type="entry name" value="PRK01253.1"/>
    <property type="match status" value="1"/>
</dbReference>
<dbReference type="Pfam" id="PF03911">
    <property type="entry name" value="Sec61_beta"/>
    <property type="match status" value="1"/>
</dbReference>
<organism>
    <name type="scientific">Pyrobaculum aerophilum (strain ATCC 51768 / DSM 7523 / JCM 9630 / CIP 104966 / NBRC 100827 / IM2)</name>
    <dbReference type="NCBI Taxonomy" id="178306"/>
    <lineage>
        <taxon>Archaea</taxon>
        <taxon>Thermoproteota</taxon>
        <taxon>Thermoprotei</taxon>
        <taxon>Thermoproteales</taxon>
        <taxon>Thermoproteaceae</taxon>
        <taxon>Pyrobaculum</taxon>
    </lineage>
</organism>
<reference key="1">
    <citation type="journal article" date="2002" name="Proc. Natl. Acad. Sci. U.S.A.">
        <title>Genome sequence of the hyperthermophilic crenarchaeon Pyrobaculum aerophilum.</title>
        <authorList>
            <person name="Fitz-Gibbon S.T."/>
            <person name="Ladner H."/>
            <person name="Kim U.-J."/>
            <person name="Stetter K.O."/>
            <person name="Simon M.I."/>
            <person name="Miller J.H."/>
        </authorList>
    </citation>
    <scope>NUCLEOTIDE SEQUENCE [LARGE SCALE GENOMIC DNA]</scope>
    <source>
        <strain>ATCC 51768 / DSM 7523 / JCM 9630 / CIP 104966 / NBRC 100827 / IM2</strain>
    </source>
</reference>
<sequence length="58" mass="6342">MARRRKYEGLNPFVAAGLIKFSEEGELEKIKLTPRAAVVISLAIIGLLIAINLLLPPL</sequence>
<name>SECG_PYRAE</name>
<evidence type="ECO:0000250" key="1"/>
<evidence type="ECO:0000305" key="2"/>